<sequence>MSTTARRRLMRDFKRMQQDPPQGVSASPVADNVLTWNAVIIGPAETPFEDGTFRMVLQFDEQYPNKPPAVKFVSQMFHPNVYSSGELCLDILQNRWSPTYDVAAILTSVQSLLNDPNTSSPANVEASMLYKDHRQQYEKRVRDTVEASWTD</sequence>
<reference key="1">
    <citation type="journal article" date="2004" name="Nature">
        <title>Genome evolution in yeasts.</title>
        <authorList>
            <person name="Dujon B."/>
            <person name="Sherman D."/>
            <person name="Fischer G."/>
            <person name="Durrens P."/>
            <person name="Casaregola S."/>
            <person name="Lafontaine I."/>
            <person name="de Montigny J."/>
            <person name="Marck C."/>
            <person name="Neuveglise C."/>
            <person name="Talla E."/>
            <person name="Goffard N."/>
            <person name="Frangeul L."/>
            <person name="Aigle M."/>
            <person name="Anthouard V."/>
            <person name="Babour A."/>
            <person name="Barbe V."/>
            <person name="Barnay S."/>
            <person name="Blanchin S."/>
            <person name="Beckerich J.-M."/>
            <person name="Beyne E."/>
            <person name="Bleykasten C."/>
            <person name="Boisrame A."/>
            <person name="Boyer J."/>
            <person name="Cattolico L."/>
            <person name="Confanioleri F."/>
            <person name="de Daruvar A."/>
            <person name="Despons L."/>
            <person name="Fabre E."/>
            <person name="Fairhead C."/>
            <person name="Ferry-Dumazet H."/>
            <person name="Groppi A."/>
            <person name="Hantraye F."/>
            <person name="Hennequin C."/>
            <person name="Jauniaux N."/>
            <person name="Joyet P."/>
            <person name="Kachouri R."/>
            <person name="Kerrest A."/>
            <person name="Koszul R."/>
            <person name="Lemaire M."/>
            <person name="Lesur I."/>
            <person name="Ma L."/>
            <person name="Muller H."/>
            <person name="Nicaud J.-M."/>
            <person name="Nikolski M."/>
            <person name="Oztas S."/>
            <person name="Ozier-Kalogeropoulos O."/>
            <person name="Pellenz S."/>
            <person name="Potier S."/>
            <person name="Richard G.-F."/>
            <person name="Straub M.-L."/>
            <person name="Suleau A."/>
            <person name="Swennen D."/>
            <person name="Tekaia F."/>
            <person name="Wesolowski-Louvel M."/>
            <person name="Westhof E."/>
            <person name="Wirth B."/>
            <person name="Zeniou-Meyer M."/>
            <person name="Zivanovic Y."/>
            <person name="Bolotin-Fukuhara M."/>
            <person name="Thierry A."/>
            <person name="Bouchier C."/>
            <person name="Caudron B."/>
            <person name="Scarpelli C."/>
            <person name="Gaillardin C."/>
            <person name="Weissenbach J."/>
            <person name="Wincker P."/>
            <person name="Souciet J.-L."/>
        </authorList>
    </citation>
    <scope>NUCLEOTIDE SEQUENCE [LARGE SCALE GENOMIC DNA]</scope>
    <source>
        <strain>CLIB 122 / E 150</strain>
    </source>
</reference>
<evidence type="ECO:0000250" key="1">
    <source>
        <dbReference type="UniProtKB" id="Q5VVX9"/>
    </source>
</evidence>
<evidence type="ECO:0000255" key="2">
    <source>
        <dbReference type="PROSITE-ProRule" id="PRU00388"/>
    </source>
</evidence>
<evidence type="ECO:0000255" key="3">
    <source>
        <dbReference type="PROSITE-ProRule" id="PRU10133"/>
    </source>
</evidence>
<evidence type="ECO:0000256" key="4">
    <source>
        <dbReference type="SAM" id="MobiDB-lite"/>
    </source>
</evidence>
<proteinExistence type="inferred from homology"/>
<keyword id="KW-0067">ATP-binding</keyword>
<keyword id="KW-0156">Chromatin regulator</keyword>
<keyword id="KW-0963">Cytoplasm</keyword>
<keyword id="KW-0227">DNA damage</keyword>
<keyword id="KW-0234">DNA repair</keyword>
<keyword id="KW-0547">Nucleotide-binding</keyword>
<keyword id="KW-0539">Nucleus</keyword>
<keyword id="KW-1185">Reference proteome</keyword>
<keyword id="KW-0749">Sporulation</keyword>
<keyword id="KW-0804">Transcription</keyword>
<keyword id="KW-0805">Transcription regulation</keyword>
<keyword id="KW-0808">Transferase</keyword>
<keyword id="KW-0833">Ubl conjugation pathway</keyword>
<gene>
    <name type="primary">UBC2</name>
    <name type="ordered locus">YALI0F26697g</name>
</gene>
<comment type="function">
    <text evidence="2">Catalyzes the covalent attachment of ubiquitin to other proteins. Plays a role in transcription regulation by catalyzing the monoubiquitination of histone H2B to form H2BK123ub1. H2BK123ub1 gives a specific tag for epigenetic transcriptional activation and is also a prerequisite for H3K4me and H3K79me formation. Also involved in postreplication repair of UV-damaged DNA, in N-end rule-dependent protein degradation and in sporulation.</text>
</comment>
<comment type="catalytic activity">
    <reaction evidence="2 3">
        <text>S-ubiquitinyl-[E1 ubiquitin-activating enzyme]-L-cysteine + [E2 ubiquitin-conjugating enzyme]-L-cysteine = [E1 ubiquitin-activating enzyme]-L-cysteine + S-ubiquitinyl-[E2 ubiquitin-conjugating enzyme]-L-cysteine.</text>
        <dbReference type="EC" id="2.3.2.23"/>
    </reaction>
</comment>
<comment type="pathway">
    <text evidence="2">Protein modification; protein ubiquitination.</text>
</comment>
<comment type="subcellular location">
    <subcellularLocation>
        <location evidence="1">Cytoplasm</location>
    </subcellularLocation>
    <subcellularLocation>
        <location evidence="1">Nucleus</location>
    </subcellularLocation>
</comment>
<comment type="similarity">
    <text evidence="2">Belongs to the ubiquitin-conjugating enzyme family.</text>
</comment>
<name>UBC2_YARLI</name>
<feature type="chain" id="PRO_0000082539" description="Ubiquitin-conjugating enzyme E2 2">
    <location>
        <begin position="1"/>
        <end position="151"/>
    </location>
</feature>
<feature type="domain" description="UBC core" evidence="2">
    <location>
        <begin position="4"/>
        <end position="150"/>
    </location>
</feature>
<feature type="region of interest" description="Disordered" evidence="4">
    <location>
        <begin position="1"/>
        <end position="26"/>
    </location>
</feature>
<feature type="active site" description="Glycyl thioester intermediate" evidence="2 3">
    <location>
        <position position="88"/>
    </location>
</feature>
<protein>
    <recommendedName>
        <fullName>Ubiquitin-conjugating enzyme E2 2</fullName>
        <ecNumber>2.3.2.23</ecNumber>
    </recommendedName>
    <alternativeName>
        <fullName>E2 ubiquitin-conjugating enzyme 2</fullName>
    </alternativeName>
    <alternativeName>
        <fullName>Ubiquitin carrier protein UBC2</fullName>
    </alternativeName>
    <alternativeName>
        <fullName>Ubiquitin-protein ligase UBC2</fullName>
    </alternativeName>
</protein>
<accession>Q6C093</accession>
<organism>
    <name type="scientific">Yarrowia lipolytica (strain CLIB 122 / E 150)</name>
    <name type="common">Yeast</name>
    <name type="synonym">Candida lipolytica</name>
    <dbReference type="NCBI Taxonomy" id="284591"/>
    <lineage>
        <taxon>Eukaryota</taxon>
        <taxon>Fungi</taxon>
        <taxon>Dikarya</taxon>
        <taxon>Ascomycota</taxon>
        <taxon>Saccharomycotina</taxon>
        <taxon>Dipodascomycetes</taxon>
        <taxon>Dipodascales</taxon>
        <taxon>Dipodascales incertae sedis</taxon>
        <taxon>Yarrowia</taxon>
    </lineage>
</organism>
<dbReference type="EC" id="2.3.2.23"/>
<dbReference type="EMBL" id="CR382132">
    <property type="protein sequence ID" value="CAG78731.1"/>
    <property type="molecule type" value="Genomic_DNA"/>
</dbReference>
<dbReference type="RefSeq" id="XP_505919.1">
    <property type="nucleotide sequence ID" value="XM_505919.1"/>
</dbReference>
<dbReference type="SMR" id="Q6C093"/>
<dbReference type="FunCoup" id="Q6C093">
    <property type="interactions" value="836"/>
</dbReference>
<dbReference type="STRING" id="284591.Q6C093"/>
<dbReference type="EnsemblFungi" id="CAG78731">
    <property type="protein sequence ID" value="CAG78731"/>
    <property type="gene ID" value="YALI0_F26697g"/>
</dbReference>
<dbReference type="KEGG" id="yli:2908858"/>
<dbReference type="VEuPathDB" id="FungiDB:YALI0_F26697g"/>
<dbReference type="HOGENOM" id="CLU_030988_10_2_1"/>
<dbReference type="InParanoid" id="Q6C093"/>
<dbReference type="OMA" id="DHKSQYI"/>
<dbReference type="OrthoDB" id="422at4891"/>
<dbReference type="UniPathway" id="UPA00143"/>
<dbReference type="Proteomes" id="UP000001300">
    <property type="component" value="Chromosome F"/>
</dbReference>
<dbReference type="GO" id="GO:0000781">
    <property type="term" value="C:chromosome, telomeric region"/>
    <property type="evidence" value="ECO:0007669"/>
    <property type="project" value="GOC"/>
</dbReference>
<dbReference type="GO" id="GO:0005737">
    <property type="term" value="C:cytoplasm"/>
    <property type="evidence" value="ECO:0007669"/>
    <property type="project" value="UniProtKB-SubCell"/>
</dbReference>
<dbReference type="GO" id="GO:0033503">
    <property type="term" value="C:HULC complex"/>
    <property type="evidence" value="ECO:0000318"/>
    <property type="project" value="GO_Central"/>
</dbReference>
<dbReference type="GO" id="GO:1990304">
    <property type="term" value="C:MUB1-RAD6-UBR2 ubiquitin ligase complex"/>
    <property type="evidence" value="ECO:0007669"/>
    <property type="project" value="EnsemblFungi"/>
</dbReference>
<dbReference type="GO" id="GO:0005634">
    <property type="term" value="C:nucleus"/>
    <property type="evidence" value="ECO:0007669"/>
    <property type="project" value="UniProtKB-SubCell"/>
</dbReference>
<dbReference type="GO" id="GO:0097505">
    <property type="term" value="C:Rad6-Rad18 complex"/>
    <property type="evidence" value="ECO:0007669"/>
    <property type="project" value="EnsemblFungi"/>
</dbReference>
<dbReference type="GO" id="GO:1990305">
    <property type="term" value="C:RAD6-UBR2 ubiquitin ligase complex"/>
    <property type="evidence" value="ECO:0007669"/>
    <property type="project" value="EnsemblFungi"/>
</dbReference>
<dbReference type="GO" id="GO:1990303">
    <property type="term" value="C:UBR1-RAD6 ubiquitin ligase complex"/>
    <property type="evidence" value="ECO:0007669"/>
    <property type="project" value="EnsemblFungi"/>
</dbReference>
<dbReference type="GO" id="GO:0005524">
    <property type="term" value="F:ATP binding"/>
    <property type="evidence" value="ECO:0007669"/>
    <property type="project" value="UniProtKB-KW"/>
</dbReference>
<dbReference type="GO" id="GO:0070628">
    <property type="term" value="F:proteasome binding"/>
    <property type="evidence" value="ECO:0007669"/>
    <property type="project" value="EnsemblFungi"/>
</dbReference>
<dbReference type="GO" id="GO:0003697">
    <property type="term" value="F:single-stranded DNA binding"/>
    <property type="evidence" value="ECO:0007669"/>
    <property type="project" value="EnsemblFungi"/>
</dbReference>
<dbReference type="GO" id="GO:0017116">
    <property type="term" value="F:single-stranded DNA helicase activity"/>
    <property type="evidence" value="ECO:0007669"/>
    <property type="project" value="EnsemblFungi"/>
</dbReference>
<dbReference type="GO" id="GO:0061631">
    <property type="term" value="F:ubiquitin conjugating enzyme activity"/>
    <property type="evidence" value="ECO:0000318"/>
    <property type="project" value="GO_Central"/>
</dbReference>
<dbReference type="GO" id="GO:0034620">
    <property type="term" value="P:cellular response to unfolded protein"/>
    <property type="evidence" value="ECO:0007669"/>
    <property type="project" value="EnsemblFungi"/>
</dbReference>
<dbReference type="GO" id="GO:0071629">
    <property type="term" value="P:cytoplasm protein quality control by the ubiquitin-proteasome system"/>
    <property type="evidence" value="ECO:0007669"/>
    <property type="project" value="EnsemblFungi"/>
</dbReference>
<dbReference type="GO" id="GO:0006281">
    <property type="term" value="P:DNA repair"/>
    <property type="evidence" value="ECO:0000318"/>
    <property type="project" value="GO_Central"/>
</dbReference>
<dbReference type="GO" id="GO:0006353">
    <property type="term" value="P:DNA-templated transcription termination"/>
    <property type="evidence" value="ECO:0007669"/>
    <property type="project" value="EnsemblFungi"/>
</dbReference>
<dbReference type="GO" id="GO:0000724">
    <property type="term" value="P:double-strand break repair via homologous recombination"/>
    <property type="evidence" value="ECO:0007669"/>
    <property type="project" value="EnsemblFungi"/>
</dbReference>
<dbReference type="GO" id="GO:0036503">
    <property type="term" value="P:ERAD pathway"/>
    <property type="evidence" value="ECO:0007669"/>
    <property type="project" value="EnsemblFungi"/>
</dbReference>
<dbReference type="GO" id="GO:0042275">
    <property type="term" value="P:error-free postreplication DNA repair"/>
    <property type="evidence" value="ECO:0007669"/>
    <property type="project" value="EnsemblFungi"/>
</dbReference>
<dbReference type="GO" id="GO:0070987">
    <property type="term" value="P:error-free translesion synthesis"/>
    <property type="evidence" value="ECO:0007669"/>
    <property type="project" value="EnsemblFungi"/>
</dbReference>
<dbReference type="GO" id="GO:0042276">
    <property type="term" value="P:error-prone translesion synthesis"/>
    <property type="evidence" value="ECO:0007669"/>
    <property type="project" value="EnsemblFungi"/>
</dbReference>
<dbReference type="GO" id="GO:0042138">
    <property type="term" value="P:meiotic DNA double-strand break formation"/>
    <property type="evidence" value="ECO:0007669"/>
    <property type="project" value="EnsemblFungi"/>
</dbReference>
<dbReference type="GO" id="GO:0031571">
    <property type="term" value="P:mitotic G1 DNA damage checkpoint signaling"/>
    <property type="evidence" value="ECO:0007669"/>
    <property type="project" value="EnsemblFungi"/>
</dbReference>
<dbReference type="GO" id="GO:2000639">
    <property type="term" value="P:negative regulation of SREBP signaling pathway"/>
    <property type="evidence" value="ECO:0007669"/>
    <property type="project" value="EnsemblFungi"/>
</dbReference>
<dbReference type="GO" id="GO:0043161">
    <property type="term" value="P:proteasome-mediated ubiquitin-dependent protein catabolic process"/>
    <property type="evidence" value="ECO:0000318"/>
    <property type="project" value="GO_Central"/>
</dbReference>
<dbReference type="GO" id="GO:0000209">
    <property type="term" value="P:protein polyubiquitination"/>
    <property type="evidence" value="ECO:0000318"/>
    <property type="project" value="GO_Central"/>
</dbReference>
<dbReference type="GO" id="GO:0090089">
    <property type="term" value="P:regulation of dipeptide transport"/>
    <property type="evidence" value="ECO:0007669"/>
    <property type="project" value="EnsemblFungi"/>
</dbReference>
<dbReference type="GO" id="GO:0009302">
    <property type="term" value="P:sno(s)RNA transcription"/>
    <property type="evidence" value="ECO:0007669"/>
    <property type="project" value="EnsemblFungi"/>
</dbReference>
<dbReference type="GO" id="GO:0030435">
    <property type="term" value="P:sporulation resulting in formation of a cellular spore"/>
    <property type="evidence" value="ECO:0007669"/>
    <property type="project" value="UniProtKB-KW"/>
</dbReference>
<dbReference type="GO" id="GO:0120174">
    <property type="term" value="P:stress-induced homeostatically regulated protein degradation pathway"/>
    <property type="evidence" value="ECO:0007669"/>
    <property type="project" value="EnsemblFungi"/>
</dbReference>
<dbReference type="GO" id="GO:0031509">
    <property type="term" value="P:subtelomeric heterochromatin formation"/>
    <property type="evidence" value="ECO:0007669"/>
    <property type="project" value="EnsemblFungi"/>
</dbReference>
<dbReference type="GO" id="GO:0000722">
    <property type="term" value="P:telomere maintenance via recombination"/>
    <property type="evidence" value="ECO:0007669"/>
    <property type="project" value="EnsemblFungi"/>
</dbReference>
<dbReference type="GO" id="GO:0006366">
    <property type="term" value="P:transcription by RNA polymerase II"/>
    <property type="evidence" value="ECO:0007669"/>
    <property type="project" value="EnsemblFungi"/>
</dbReference>
<dbReference type="GO" id="GO:0071596">
    <property type="term" value="P:ubiquitin-dependent protein catabolic process via the N-end rule pathway"/>
    <property type="evidence" value="ECO:0007669"/>
    <property type="project" value="EnsemblFungi"/>
</dbReference>
<dbReference type="CDD" id="cd23790">
    <property type="entry name" value="UBCc_UBE2A_2B"/>
    <property type="match status" value="1"/>
</dbReference>
<dbReference type="FunFam" id="3.10.110.10:FF:000007">
    <property type="entry name" value="Ubiquitin-conjugating enzyme E2 2"/>
    <property type="match status" value="1"/>
</dbReference>
<dbReference type="Gene3D" id="3.10.110.10">
    <property type="entry name" value="Ubiquitin Conjugating Enzyme"/>
    <property type="match status" value="1"/>
</dbReference>
<dbReference type="InterPro" id="IPR050113">
    <property type="entry name" value="Ub_conjugating_enzyme"/>
</dbReference>
<dbReference type="InterPro" id="IPR000608">
    <property type="entry name" value="UBQ-conjugat_E2_core"/>
</dbReference>
<dbReference type="InterPro" id="IPR023313">
    <property type="entry name" value="UBQ-conjugating_AS"/>
</dbReference>
<dbReference type="InterPro" id="IPR016135">
    <property type="entry name" value="UBQ-conjugating_enzyme/RWD"/>
</dbReference>
<dbReference type="PANTHER" id="PTHR24067">
    <property type="entry name" value="UBIQUITIN-CONJUGATING ENZYME E2"/>
    <property type="match status" value="1"/>
</dbReference>
<dbReference type="Pfam" id="PF00179">
    <property type="entry name" value="UQ_con"/>
    <property type="match status" value="1"/>
</dbReference>
<dbReference type="SMART" id="SM00212">
    <property type="entry name" value="UBCc"/>
    <property type="match status" value="1"/>
</dbReference>
<dbReference type="SUPFAM" id="SSF54495">
    <property type="entry name" value="UBC-like"/>
    <property type="match status" value="1"/>
</dbReference>
<dbReference type="PROSITE" id="PS00183">
    <property type="entry name" value="UBC_1"/>
    <property type="match status" value="1"/>
</dbReference>
<dbReference type="PROSITE" id="PS50127">
    <property type="entry name" value="UBC_2"/>
    <property type="match status" value="1"/>
</dbReference>